<feature type="chain" id="PRO_1000144033" description="Large ribosomal subunit protein uL6">
    <location>
        <begin position="1"/>
        <end position="177"/>
    </location>
</feature>
<gene>
    <name evidence="1" type="primary">rplF</name>
    <name type="ordered locus">PputW619_4734</name>
</gene>
<comment type="function">
    <text evidence="1">This protein binds to the 23S rRNA, and is important in its secondary structure. It is located near the subunit interface in the base of the L7/L12 stalk, and near the tRNA binding site of the peptidyltransferase center.</text>
</comment>
<comment type="subunit">
    <text evidence="1">Part of the 50S ribosomal subunit.</text>
</comment>
<comment type="similarity">
    <text evidence="1">Belongs to the universal ribosomal protein uL6 family.</text>
</comment>
<name>RL6_PSEPW</name>
<reference key="1">
    <citation type="submission" date="2008-02" db="EMBL/GenBank/DDBJ databases">
        <title>Complete sequence of Pseudomonas putida W619.</title>
        <authorList>
            <person name="Copeland A."/>
            <person name="Lucas S."/>
            <person name="Lapidus A."/>
            <person name="Barry K."/>
            <person name="Detter J.C."/>
            <person name="Glavina del Rio T."/>
            <person name="Dalin E."/>
            <person name="Tice H."/>
            <person name="Pitluck S."/>
            <person name="Chain P."/>
            <person name="Malfatti S."/>
            <person name="Shin M."/>
            <person name="Vergez L."/>
            <person name="Schmutz J."/>
            <person name="Larimer F."/>
            <person name="Land M."/>
            <person name="Hauser L."/>
            <person name="Kyrpides N."/>
            <person name="Kim E."/>
            <person name="Taghavi S."/>
            <person name="Vangronsveld D."/>
            <person name="van der Lelie D."/>
            <person name="Richardson P."/>
        </authorList>
    </citation>
    <scope>NUCLEOTIDE SEQUENCE [LARGE SCALE GENOMIC DNA]</scope>
    <source>
        <strain>W619</strain>
    </source>
</reference>
<organism>
    <name type="scientific">Pseudomonas putida (strain W619)</name>
    <dbReference type="NCBI Taxonomy" id="390235"/>
    <lineage>
        <taxon>Bacteria</taxon>
        <taxon>Pseudomonadati</taxon>
        <taxon>Pseudomonadota</taxon>
        <taxon>Gammaproteobacteria</taxon>
        <taxon>Pseudomonadales</taxon>
        <taxon>Pseudomonadaceae</taxon>
        <taxon>Pseudomonas</taxon>
    </lineage>
</organism>
<protein>
    <recommendedName>
        <fullName evidence="1">Large ribosomal subunit protein uL6</fullName>
    </recommendedName>
    <alternativeName>
        <fullName evidence="2">50S ribosomal protein L6</fullName>
    </alternativeName>
</protein>
<dbReference type="EMBL" id="CP000949">
    <property type="protein sequence ID" value="ACA75210.1"/>
    <property type="molecule type" value="Genomic_DNA"/>
</dbReference>
<dbReference type="SMR" id="B1JAJ7"/>
<dbReference type="STRING" id="390235.PputW619_4734"/>
<dbReference type="KEGG" id="ppw:PputW619_4734"/>
<dbReference type="eggNOG" id="COG0097">
    <property type="taxonomic scope" value="Bacteria"/>
</dbReference>
<dbReference type="HOGENOM" id="CLU_065464_1_2_6"/>
<dbReference type="OrthoDB" id="9805007at2"/>
<dbReference type="GO" id="GO:0022625">
    <property type="term" value="C:cytosolic large ribosomal subunit"/>
    <property type="evidence" value="ECO:0007669"/>
    <property type="project" value="TreeGrafter"/>
</dbReference>
<dbReference type="GO" id="GO:0019843">
    <property type="term" value="F:rRNA binding"/>
    <property type="evidence" value="ECO:0007669"/>
    <property type="project" value="UniProtKB-UniRule"/>
</dbReference>
<dbReference type="GO" id="GO:0003735">
    <property type="term" value="F:structural constituent of ribosome"/>
    <property type="evidence" value="ECO:0007669"/>
    <property type="project" value="InterPro"/>
</dbReference>
<dbReference type="GO" id="GO:0002181">
    <property type="term" value="P:cytoplasmic translation"/>
    <property type="evidence" value="ECO:0007669"/>
    <property type="project" value="TreeGrafter"/>
</dbReference>
<dbReference type="FunFam" id="3.90.930.12:FF:000001">
    <property type="entry name" value="50S ribosomal protein L6"/>
    <property type="match status" value="1"/>
</dbReference>
<dbReference type="FunFam" id="3.90.930.12:FF:000002">
    <property type="entry name" value="50S ribosomal protein L6"/>
    <property type="match status" value="1"/>
</dbReference>
<dbReference type="Gene3D" id="3.90.930.12">
    <property type="entry name" value="Ribosomal protein L6, alpha-beta domain"/>
    <property type="match status" value="2"/>
</dbReference>
<dbReference type="HAMAP" id="MF_01365_B">
    <property type="entry name" value="Ribosomal_uL6_B"/>
    <property type="match status" value="1"/>
</dbReference>
<dbReference type="InterPro" id="IPR000702">
    <property type="entry name" value="Ribosomal_uL6-like"/>
</dbReference>
<dbReference type="InterPro" id="IPR036789">
    <property type="entry name" value="Ribosomal_uL6-like_a/b-dom_sf"/>
</dbReference>
<dbReference type="InterPro" id="IPR020040">
    <property type="entry name" value="Ribosomal_uL6_a/b-dom"/>
</dbReference>
<dbReference type="InterPro" id="IPR019906">
    <property type="entry name" value="Ribosomal_uL6_bac-type"/>
</dbReference>
<dbReference type="InterPro" id="IPR002358">
    <property type="entry name" value="Ribosomal_uL6_CS"/>
</dbReference>
<dbReference type="NCBIfam" id="TIGR03654">
    <property type="entry name" value="L6_bact"/>
    <property type="match status" value="1"/>
</dbReference>
<dbReference type="PANTHER" id="PTHR11655">
    <property type="entry name" value="60S/50S RIBOSOMAL PROTEIN L6/L9"/>
    <property type="match status" value="1"/>
</dbReference>
<dbReference type="PANTHER" id="PTHR11655:SF14">
    <property type="entry name" value="LARGE RIBOSOMAL SUBUNIT PROTEIN UL6M"/>
    <property type="match status" value="1"/>
</dbReference>
<dbReference type="Pfam" id="PF00347">
    <property type="entry name" value="Ribosomal_L6"/>
    <property type="match status" value="2"/>
</dbReference>
<dbReference type="PIRSF" id="PIRSF002162">
    <property type="entry name" value="Ribosomal_L6"/>
    <property type="match status" value="1"/>
</dbReference>
<dbReference type="PRINTS" id="PR00059">
    <property type="entry name" value="RIBOSOMALL6"/>
</dbReference>
<dbReference type="SUPFAM" id="SSF56053">
    <property type="entry name" value="Ribosomal protein L6"/>
    <property type="match status" value="2"/>
</dbReference>
<dbReference type="PROSITE" id="PS00525">
    <property type="entry name" value="RIBOSOMAL_L6_1"/>
    <property type="match status" value="1"/>
</dbReference>
<sequence length="177" mass="19127">MSRVAKNPVKLPAGVEVKFAGQQLSVKGAKGTLELNVHSSVEVTEESGELRFVARNGDQQARAMAGTTRALVNNMVQGVSQGFERKLQLVGVGYKAQAKGTVLNLALGFSHPVDYELPAGITAETPSQTDILIKGIDKQLVGQVAAEIRDFRPPEPYKGKGVRYADEVVRRKEAKKK</sequence>
<accession>B1JAJ7</accession>
<proteinExistence type="inferred from homology"/>
<keyword id="KW-0687">Ribonucleoprotein</keyword>
<keyword id="KW-0689">Ribosomal protein</keyword>
<keyword id="KW-0694">RNA-binding</keyword>
<keyword id="KW-0699">rRNA-binding</keyword>
<evidence type="ECO:0000255" key="1">
    <source>
        <dbReference type="HAMAP-Rule" id="MF_01365"/>
    </source>
</evidence>
<evidence type="ECO:0000305" key="2"/>